<protein>
    <recommendedName>
        <fullName>Expansin-like A1</fullName>
        <shortName>At-EXPL1</shortName>
        <shortName>AtEXLA1</shortName>
        <shortName>AtEXPL1</shortName>
    </recommendedName>
    <alternativeName>
        <fullName>Ath-ExpBeta-2.1</fullName>
    </alternativeName>
</protein>
<evidence type="ECO:0000255" key="1"/>
<evidence type="ECO:0000255" key="2">
    <source>
        <dbReference type="PROSITE-ProRule" id="PRU00078"/>
    </source>
</evidence>
<evidence type="ECO:0000255" key="3">
    <source>
        <dbReference type="PROSITE-ProRule" id="PRU00079"/>
    </source>
</evidence>
<evidence type="ECO:0000305" key="4"/>
<dbReference type="EMBL" id="AL162459">
    <property type="protein sequence ID" value="CAB82821.1"/>
    <property type="molecule type" value="Genomic_DNA"/>
</dbReference>
<dbReference type="EMBL" id="CP002686">
    <property type="protein sequence ID" value="AEE78096.1"/>
    <property type="molecule type" value="Genomic_DNA"/>
</dbReference>
<dbReference type="EMBL" id="AF378896">
    <property type="protein sequence ID" value="AAK55699.1"/>
    <property type="molecule type" value="mRNA"/>
</dbReference>
<dbReference type="EMBL" id="AY052745">
    <property type="protein sequence ID" value="AAK96459.1"/>
    <property type="molecule type" value="mRNA"/>
</dbReference>
<dbReference type="EMBL" id="AY058142">
    <property type="protein sequence ID" value="AAL25558.1"/>
    <property type="molecule type" value="mRNA"/>
</dbReference>
<dbReference type="PIR" id="T47537">
    <property type="entry name" value="T47537"/>
</dbReference>
<dbReference type="RefSeq" id="NP_190183.1">
    <property type="nucleotide sequence ID" value="NM_114466.1"/>
</dbReference>
<dbReference type="SMR" id="Q9LZT4"/>
<dbReference type="BioGRID" id="9060">
    <property type="interactions" value="3"/>
</dbReference>
<dbReference type="FunCoup" id="Q9LZT4">
    <property type="interactions" value="22"/>
</dbReference>
<dbReference type="IntAct" id="Q9LZT4">
    <property type="interactions" value="2"/>
</dbReference>
<dbReference type="STRING" id="3702.Q9LZT4"/>
<dbReference type="GlyCosmos" id="Q9LZT4">
    <property type="glycosylation" value="2 sites, No reported glycans"/>
</dbReference>
<dbReference type="GlyGen" id="Q9LZT4">
    <property type="glycosylation" value="2 sites"/>
</dbReference>
<dbReference type="PaxDb" id="3702-AT3G45970.1"/>
<dbReference type="ProteomicsDB" id="222268"/>
<dbReference type="EnsemblPlants" id="AT3G45970.1">
    <property type="protein sequence ID" value="AT3G45970.1"/>
    <property type="gene ID" value="AT3G45970"/>
</dbReference>
<dbReference type="GeneID" id="823740"/>
<dbReference type="Gramene" id="AT3G45970.1">
    <property type="protein sequence ID" value="AT3G45970.1"/>
    <property type="gene ID" value="AT3G45970"/>
</dbReference>
<dbReference type="KEGG" id="ath:AT3G45970"/>
<dbReference type="Araport" id="AT3G45970"/>
<dbReference type="TAIR" id="AT3G45970">
    <property type="gene designation" value="EXLA1"/>
</dbReference>
<dbReference type="eggNOG" id="ENOG502QSGZ">
    <property type="taxonomic scope" value="Eukaryota"/>
</dbReference>
<dbReference type="HOGENOM" id="CLU_027462_3_1_1"/>
<dbReference type="InParanoid" id="Q9LZT4"/>
<dbReference type="OMA" id="MRHAGVE"/>
<dbReference type="PhylomeDB" id="Q9LZT4"/>
<dbReference type="CD-CODE" id="4299E36E">
    <property type="entry name" value="Nucleolus"/>
</dbReference>
<dbReference type="PRO" id="PR:Q9LZT4"/>
<dbReference type="Proteomes" id="UP000006548">
    <property type="component" value="Chromosome 3"/>
</dbReference>
<dbReference type="ExpressionAtlas" id="Q9LZT4">
    <property type="expression patterns" value="baseline and differential"/>
</dbReference>
<dbReference type="GO" id="GO:0005576">
    <property type="term" value="C:extracellular region"/>
    <property type="evidence" value="ECO:0007669"/>
    <property type="project" value="InterPro"/>
</dbReference>
<dbReference type="GO" id="GO:0005794">
    <property type="term" value="C:Golgi apparatus"/>
    <property type="evidence" value="ECO:0007005"/>
    <property type="project" value="TAIR"/>
</dbReference>
<dbReference type="GO" id="GO:0016020">
    <property type="term" value="C:membrane"/>
    <property type="evidence" value="ECO:0007669"/>
    <property type="project" value="UniProtKB-SubCell"/>
</dbReference>
<dbReference type="GO" id="GO:0009505">
    <property type="term" value="C:plant-type cell wall"/>
    <property type="evidence" value="ECO:0007005"/>
    <property type="project" value="TAIR"/>
</dbReference>
<dbReference type="GO" id="GO:0009506">
    <property type="term" value="C:plasmodesma"/>
    <property type="evidence" value="ECO:0007005"/>
    <property type="project" value="TAIR"/>
</dbReference>
<dbReference type="GO" id="GO:0099503">
    <property type="term" value="C:secretory vesicle"/>
    <property type="evidence" value="ECO:0007005"/>
    <property type="project" value="TAIR"/>
</dbReference>
<dbReference type="GO" id="GO:0009653">
    <property type="term" value="P:anatomical structure morphogenesis"/>
    <property type="evidence" value="ECO:0007669"/>
    <property type="project" value="UniProtKB-ARBA"/>
</dbReference>
<dbReference type="GO" id="GO:0009828">
    <property type="term" value="P:plant-type cell wall loosening"/>
    <property type="evidence" value="ECO:0000250"/>
    <property type="project" value="UniProtKB"/>
</dbReference>
<dbReference type="CDD" id="cd22276">
    <property type="entry name" value="DPBB_EXLA_N"/>
    <property type="match status" value="1"/>
</dbReference>
<dbReference type="FunFam" id="2.40.40.10:FF:000006">
    <property type="entry name" value="Expansin-like A2"/>
    <property type="match status" value="1"/>
</dbReference>
<dbReference type="FunFam" id="2.60.40.760:FF:000003">
    <property type="entry name" value="Expansin-like A2"/>
    <property type="match status" value="1"/>
</dbReference>
<dbReference type="Gene3D" id="2.60.40.760">
    <property type="entry name" value="Expansin, cellulose-binding-like domain"/>
    <property type="match status" value="1"/>
</dbReference>
<dbReference type="Gene3D" id="2.40.40.10">
    <property type="entry name" value="RlpA-like domain"/>
    <property type="match status" value="1"/>
</dbReference>
<dbReference type="InterPro" id="IPR007118">
    <property type="entry name" value="Expan_Lol_pI"/>
</dbReference>
<dbReference type="InterPro" id="IPR007112">
    <property type="entry name" value="Expansin/allergen_DPBB_dom"/>
</dbReference>
<dbReference type="InterPro" id="IPR007117">
    <property type="entry name" value="Expansin_CBD"/>
</dbReference>
<dbReference type="InterPro" id="IPR036749">
    <property type="entry name" value="Expansin_CBD_sf"/>
</dbReference>
<dbReference type="InterPro" id="IPR009009">
    <property type="entry name" value="RlpA-like_DPBB"/>
</dbReference>
<dbReference type="InterPro" id="IPR036908">
    <property type="entry name" value="RlpA-like_sf"/>
</dbReference>
<dbReference type="PANTHER" id="PTHR31692">
    <property type="entry name" value="EXPANSIN-B3"/>
    <property type="match status" value="1"/>
</dbReference>
<dbReference type="PANTHER" id="PTHR31692:SF4">
    <property type="entry name" value="EXPANSIN-LIKE A1-RELATED"/>
    <property type="match status" value="1"/>
</dbReference>
<dbReference type="Pfam" id="PF03330">
    <property type="entry name" value="DPBB_1"/>
    <property type="match status" value="1"/>
</dbReference>
<dbReference type="Pfam" id="PF01357">
    <property type="entry name" value="Expansin_C"/>
    <property type="match status" value="1"/>
</dbReference>
<dbReference type="PRINTS" id="PR01225">
    <property type="entry name" value="EXPANSNFAMLY"/>
</dbReference>
<dbReference type="SMART" id="SM00837">
    <property type="entry name" value="DPBB_1"/>
    <property type="match status" value="1"/>
</dbReference>
<dbReference type="SUPFAM" id="SSF50685">
    <property type="entry name" value="Barwin-like endoglucanases"/>
    <property type="match status" value="1"/>
</dbReference>
<dbReference type="SUPFAM" id="SSF49590">
    <property type="entry name" value="PHL pollen allergen"/>
    <property type="match status" value="1"/>
</dbReference>
<dbReference type="PROSITE" id="PS50843">
    <property type="entry name" value="EXPANSIN_CBD"/>
    <property type="match status" value="1"/>
</dbReference>
<dbReference type="PROSITE" id="PS50842">
    <property type="entry name" value="EXPANSIN_EG45"/>
    <property type="match status" value="1"/>
</dbReference>
<feature type="signal peptide" evidence="1">
    <location>
        <begin position="1"/>
        <end position="20"/>
    </location>
</feature>
<feature type="chain" id="PRO_0000008712" description="Expansin-like A1">
    <location>
        <begin position="21"/>
        <end position="265"/>
    </location>
</feature>
<feature type="transmembrane region" description="Helical" evidence="1">
    <location>
        <begin position="42"/>
        <end position="62"/>
    </location>
</feature>
<feature type="domain" description="Expansin-like EG45" evidence="3">
    <location>
        <begin position="41"/>
        <end position="147"/>
    </location>
</feature>
<feature type="domain" description="Expansin-like CBD" evidence="2">
    <location>
        <begin position="161"/>
        <end position="244"/>
    </location>
</feature>
<feature type="glycosylation site" description="N-linked (GlcNAc...) asparagine" evidence="1">
    <location>
        <position position="99"/>
    </location>
</feature>
<feature type="glycosylation site" description="N-linked (GlcNAc...) asparagine" evidence="1">
    <location>
        <position position="102"/>
    </location>
</feature>
<reference key="1">
    <citation type="journal article" date="2000" name="Nature">
        <title>Sequence and analysis of chromosome 3 of the plant Arabidopsis thaliana.</title>
        <authorList>
            <person name="Salanoubat M."/>
            <person name="Lemcke K."/>
            <person name="Rieger M."/>
            <person name="Ansorge W."/>
            <person name="Unseld M."/>
            <person name="Fartmann B."/>
            <person name="Valle G."/>
            <person name="Bloecker H."/>
            <person name="Perez-Alonso M."/>
            <person name="Obermaier B."/>
            <person name="Delseny M."/>
            <person name="Boutry M."/>
            <person name="Grivell L.A."/>
            <person name="Mache R."/>
            <person name="Puigdomenech P."/>
            <person name="De Simone V."/>
            <person name="Choisne N."/>
            <person name="Artiguenave F."/>
            <person name="Robert C."/>
            <person name="Brottier P."/>
            <person name="Wincker P."/>
            <person name="Cattolico L."/>
            <person name="Weissenbach J."/>
            <person name="Saurin W."/>
            <person name="Quetier F."/>
            <person name="Schaefer M."/>
            <person name="Mueller-Auer S."/>
            <person name="Gabel C."/>
            <person name="Fuchs M."/>
            <person name="Benes V."/>
            <person name="Wurmbach E."/>
            <person name="Drzonek H."/>
            <person name="Erfle H."/>
            <person name="Jordan N."/>
            <person name="Bangert S."/>
            <person name="Wiedelmann R."/>
            <person name="Kranz H."/>
            <person name="Voss H."/>
            <person name="Holland R."/>
            <person name="Brandt P."/>
            <person name="Nyakatura G."/>
            <person name="Vezzi A."/>
            <person name="D'Angelo M."/>
            <person name="Pallavicini A."/>
            <person name="Toppo S."/>
            <person name="Simionati B."/>
            <person name="Conrad A."/>
            <person name="Hornischer K."/>
            <person name="Kauer G."/>
            <person name="Loehnert T.-H."/>
            <person name="Nordsiek G."/>
            <person name="Reichelt J."/>
            <person name="Scharfe M."/>
            <person name="Schoen O."/>
            <person name="Bargues M."/>
            <person name="Terol J."/>
            <person name="Climent J."/>
            <person name="Navarro P."/>
            <person name="Collado C."/>
            <person name="Perez-Perez A."/>
            <person name="Ottenwaelder B."/>
            <person name="Duchemin D."/>
            <person name="Cooke R."/>
            <person name="Laudie M."/>
            <person name="Berger-Llauro C."/>
            <person name="Purnelle B."/>
            <person name="Masuy D."/>
            <person name="de Haan M."/>
            <person name="Maarse A.C."/>
            <person name="Alcaraz J.-P."/>
            <person name="Cottet A."/>
            <person name="Casacuberta E."/>
            <person name="Monfort A."/>
            <person name="Argiriou A."/>
            <person name="Flores M."/>
            <person name="Liguori R."/>
            <person name="Vitale D."/>
            <person name="Mannhaupt G."/>
            <person name="Haase D."/>
            <person name="Schoof H."/>
            <person name="Rudd S."/>
            <person name="Zaccaria P."/>
            <person name="Mewes H.-W."/>
            <person name="Mayer K.F.X."/>
            <person name="Kaul S."/>
            <person name="Town C.D."/>
            <person name="Koo H.L."/>
            <person name="Tallon L.J."/>
            <person name="Jenkins J."/>
            <person name="Rooney T."/>
            <person name="Rizzo M."/>
            <person name="Walts A."/>
            <person name="Utterback T."/>
            <person name="Fujii C.Y."/>
            <person name="Shea T.P."/>
            <person name="Creasy T.H."/>
            <person name="Haas B."/>
            <person name="Maiti R."/>
            <person name="Wu D."/>
            <person name="Peterson J."/>
            <person name="Van Aken S."/>
            <person name="Pai G."/>
            <person name="Militscher J."/>
            <person name="Sellers P."/>
            <person name="Gill J.E."/>
            <person name="Feldblyum T.V."/>
            <person name="Preuss D."/>
            <person name="Lin X."/>
            <person name="Nierman W.C."/>
            <person name="Salzberg S.L."/>
            <person name="White O."/>
            <person name="Venter J.C."/>
            <person name="Fraser C.M."/>
            <person name="Kaneko T."/>
            <person name="Nakamura Y."/>
            <person name="Sato S."/>
            <person name="Kato T."/>
            <person name="Asamizu E."/>
            <person name="Sasamoto S."/>
            <person name="Kimura T."/>
            <person name="Idesawa K."/>
            <person name="Kawashima K."/>
            <person name="Kishida Y."/>
            <person name="Kiyokawa C."/>
            <person name="Kohara M."/>
            <person name="Matsumoto M."/>
            <person name="Matsuno A."/>
            <person name="Muraki A."/>
            <person name="Nakayama S."/>
            <person name="Nakazaki N."/>
            <person name="Shinpo S."/>
            <person name="Takeuchi C."/>
            <person name="Wada T."/>
            <person name="Watanabe A."/>
            <person name="Yamada M."/>
            <person name="Yasuda M."/>
            <person name="Tabata S."/>
        </authorList>
    </citation>
    <scope>NUCLEOTIDE SEQUENCE [LARGE SCALE GENOMIC DNA]</scope>
    <source>
        <strain>cv. Columbia</strain>
    </source>
</reference>
<reference key="2">
    <citation type="journal article" date="2017" name="Plant J.">
        <title>Araport11: a complete reannotation of the Arabidopsis thaliana reference genome.</title>
        <authorList>
            <person name="Cheng C.Y."/>
            <person name="Krishnakumar V."/>
            <person name="Chan A.P."/>
            <person name="Thibaud-Nissen F."/>
            <person name="Schobel S."/>
            <person name="Town C.D."/>
        </authorList>
    </citation>
    <scope>GENOME REANNOTATION</scope>
    <source>
        <strain>cv. Columbia</strain>
    </source>
</reference>
<reference key="3">
    <citation type="journal article" date="2003" name="Science">
        <title>Empirical analysis of transcriptional activity in the Arabidopsis genome.</title>
        <authorList>
            <person name="Yamada K."/>
            <person name="Lim J."/>
            <person name="Dale J.M."/>
            <person name="Chen H."/>
            <person name="Shinn P."/>
            <person name="Palm C.J."/>
            <person name="Southwick A.M."/>
            <person name="Wu H.C."/>
            <person name="Kim C.J."/>
            <person name="Nguyen M."/>
            <person name="Pham P.K."/>
            <person name="Cheuk R.F."/>
            <person name="Karlin-Newmann G."/>
            <person name="Liu S.X."/>
            <person name="Lam B."/>
            <person name="Sakano H."/>
            <person name="Wu T."/>
            <person name="Yu G."/>
            <person name="Miranda M."/>
            <person name="Quach H.L."/>
            <person name="Tripp M."/>
            <person name="Chang C.H."/>
            <person name="Lee J.M."/>
            <person name="Toriumi M.J."/>
            <person name="Chan M.M."/>
            <person name="Tang C.C."/>
            <person name="Onodera C.S."/>
            <person name="Deng J.M."/>
            <person name="Akiyama K."/>
            <person name="Ansari Y."/>
            <person name="Arakawa T."/>
            <person name="Banh J."/>
            <person name="Banno F."/>
            <person name="Bowser L."/>
            <person name="Brooks S.Y."/>
            <person name="Carninci P."/>
            <person name="Chao Q."/>
            <person name="Choy N."/>
            <person name="Enju A."/>
            <person name="Goldsmith A.D."/>
            <person name="Gurjal M."/>
            <person name="Hansen N.F."/>
            <person name="Hayashizaki Y."/>
            <person name="Johnson-Hopson C."/>
            <person name="Hsuan V.W."/>
            <person name="Iida K."/>
            <person name="Karnes M."/>
            <person name="Khan S."/>
            <person name="Koesema E."/>
            <person name="Ishida J."/>
            <person name="Jiang P.X."/>
            <person name="Jones T."/>
            <person name="Kawai J."/>
            <person name="Kamiya A."/>
            <person name="Meyers C."/>
            <person name="Nakajima M."/>
            <person name="Narusaka M."/>
            <person name="Seki M."/>
            <person name="Sakurai T."/>
            <person name="Satou M."/>
            <person name="Tamse R."/>
            <person name="Vaysberg M."/>
            <person name="Wallender E.K."/>
            <person name="Wong C."/>
            <person name="Yamamura Y."/>
            <person name="Yuan S."/>
            <person name="Shinozaki K."/>
            <person name="Davis R.W."/>
            <person name="Theologis A."/>
            <person name="Ecker J.R."/>
        </authorList>
    </citation>
    <scope>NUCLEOTIDE SEQUENCE [LARGE SCALE MRNA]</scope>
    <source>
        <strain>cv. Columbia</strain>
    </source>
</reference>
<reference key="4">
    <citation type="journal article" date="2004" name="Plant Mol. Biol.">
        <title>Nomenclature for members of the expansin superfamily of genes and proteins.</title>
        <authorList>
            <person name="Kende H."/>
            <person name="Bradford K.J."/>
            <person name="Brummell D.A."/>
            <person name="Cho H.-T."/>
            <person name="Cosgrove D.J."/>
            <person name="Fleming A.J."/>
            <person name="Gehring C."/>
            <person name="Lee Y."/>
            <person name="McQueen-Mason S.J."/>
            <person name="Rose J.K.C."/>
            <person name="Voesenek L.A.C."/>
        </authorList>
    </citation>
    <scope>NOMENCLATURE</scope>
</reference>
<gene>
    <name type="primary">EXLA1</name>
    <name type="synonym">EXPL1</name>
    <name type="ordered locus">At3g45970</name>
    <name type="ORF">F16L2_180</name>
</gene>
<sequence length="265" mass="28702">MGSFLFLIVVIFLFSSSVNACDRCLHRSKAAYFSSASALSSGACAYGSMATSFFAGHIAAAIPSIYKDGAGCGACFQVRCKNPKLCSTKGTIVMITDLNKSNQTDLVLSSRAFRAMAKPIVGADKDLLKQGIVDIEYQRVPCDYGNKNMNVRVEEASKKPNYLEIKLLYQGGQTEVVSIDIAQVGSSPNWGYMTRSHGAVWVTDKVPTGAIQFRFVVTGGYDGKMIWSQSVLPSNWEAGKIYDAGVQITDIAQEGCDPCDAHIWN</sequence>
<comment type="subcellular location">
    <subcellularLocation>
        <location evidence="4">Membrane</location>
        <topology evidence="4">Single-pass type I membrane protein</topology>
    </subcellularLocation>
</comment>
<comment type="similarity">
    <text evidence="4">Belongs to the expansin family. Expansin-like A subfamily.</text>
</comment>
<comment type="online information" name="EXPANSIN homepage">
    <link uri="https://www.dept.psu.edu/biology/groups/expansins/index.htm"/>
</comment>
<organism>
    <name type="scientific">Arabidopsis thaliana</name>
    <name type="common">Mouse-ear cress</name>
    <dbReference type="NCBI Taxonomy" id="3702"/>
    <lineage>
        <taxon>Eukaryota</taxon>
        <taxon>Viridiplantae</taxon>
        <taxon>Streptophyta</taxon>
        <taxon>Embryophyta</taxon>
        <taxon>Tracheophyta</taxon>
        <taxon>Spermatophyta</taxon>
        <taxon>Magnoliopsida</taxon>
        <taxon>eudicotyledons</taxon>
        <taxon>Gunneridae</taxon>
        <taxon>Pentapetalae</taxon>
        <taxon>rosids</taxon>
        <taxon>malvids</taxon>
        <taxon>Brassicales</taxon>
        <taxon>Brassicaceae</taxon>
        <taxon>Camelineae</taxon>
        <taxon>Arabidopsis</taxon>
    </lineage>
</organism>
<proteinExistence type="evidence at transcript level"/>
<accession>Q9LZT4</accession>
<name>EXLA1_ARATH</name>
<keyword id="KW-0325">Glycoprotein</keyword>
<keyword id="KW-0472">Membrane</keyword>
<keyword id="KW-1185">Reference proteome</keyword>
<keyword id="KW-0732">Signal</keyword>
<keyword id="KW-0812">Transmembrane</keyword>
<keyword id="KW-1133">Transmembrane helix</keyword>